<accession>Q2TZ19</accession>
<comment type="function">
    <text evidence="1">RNA-binding component of the cleavage and polyadenylation factor (CPF) complex, which plays a key role in polyadenylation-dependent pre-mRNA 3'-end formation and cooperates with cleavage factors including the CFIA complex and NAB4/CFIB. Involved in poly(A) site recognition. May be involved in coupling transcription termination and mRNA 3'-end formation (By similarity).</text>
</comment>
<comment type="subcellular location">
    <subcellularLocation>
        <location evidence="1">Nucleus</location>
    </subcellularLocation>
</comment>
<comment type="similarity">
    <text evidence="3">Belongs to the CFT1 family.</text>
</comment>
<reference key="1">
    <citation type="journal article" date="2005" name="Nature">
        <title>Genome sequencing and analysis of Aspergillus oryzae.</title>
        <authorList>
            <person name="Machida M."/>
            <person name="Asai K."/>
            <person name="Sano M."/>
            <person name="Tanaka T."/>
            <person name="Kumagai T."/>
            <person name="Terai G."/>
            <person name="Kusumoto K."/>
            <person name="Arima T."/>
            <person name="Akita O."/>
            <person name="Kashiwagi Y."/>
            <person name="Abe K."/>
            <person name="Gomi K."/>
            <person name="Horiuchi H."/>
            <person name="Kitamoto K."/>
            <person name="Kobayashi T."/>
            <person name="Takeuchi M."/>
            <person name="Denning D.W."/>
            <person name="Galagan J.E."/>
            <person name="Nierman W.C."/>
            <person name="Yu J."/>
            <person name="Archer D.B."/>
            <person name="Bennett J.W."/>
            <person name="Bhatnagar D."/>
            <person name="Cleveland T.E."/>
            <person name="Fedorova N.D."/>
            <person name="Gotoh O."/>
            <person name="Horikawa H."/>
            <person name="Hosoyama A."/>
            <person name="Ichinomiya M."/>
            <person name="Igarashi R."/>
            <person name="Iwashita K."/>
            <person name="Juvvadi P.R."/>
            <person name="Kato M."/>
            <person name="Kato Y."/>
            <person name="Kin T."/>
            <person name="Kokubun A."/>
            <person name="Maeda H."/>
            <person name="Maeyama N."/>
            <person name="Maruyama J."/>
            <person name="Nagasaki H."/>
            <person name="Nakajima T."/>
            <person name="Oda K."/>
            <person name="Okada K."/>
            <person name="Paulsen I."/>
            <person name="Sakamoto K."/>
            <person name="Sawano T."/>
            <person name="Takahashi M."/>
            <person name="Takase K."/>
            <person name="Terabayashi Y."/>
            <person name="Wortman J.R."/>
            <person name="Yamada O."/>
            <person name="Yamagata Y."/>
            <person name="Anazawa H."/>
            <person name="Hata Y."/>
            <person name="Koide Y."/>
            <person name="Komori T."/>
            <person name="Koyama Y."/>
            <person name="Minetoki T."/>
            <person name="Suharnan S."/>
            <person name="Tanaka A."/>
            <person name="Isono K."/>
            <person name="Kuhara S."/>
            <person name="Ogasawara N."/>
            <person name="Kikuchi H."/>
        </authorList>
    </citation>
    <scope>NUCLEOTIDE SEQUENCE [LARGE SCALE GENOMIC DNA]</scope>
    <source>
        <strain>ATCC 42149 / RIB 40</strain>
    </source>
</reference>
<sequence>MQCYTELLPPTGVTHSLALPFISESANNLVVARTSRLQIFSLLDVGPRPGGIEEQGVPKLVLEREYALPGTVTDLCRVKLLNTKSGGEAILLAFRNAKLALIEWDPGRYGICTISIHYYERDDSTSSPWVPDLSSCGSILSVDPSSRCAVFNFGIRNLAILPFHQPGDDLVMDDYGELDDERLGSHGLESGTDCDMTKESIAHRAPYSSSFVLPLAALDPSILHPISLAFLYEYREPTFGILYSQVATSNALLHERKDVVFYTVFTLDLEQRASTTLLSVSRLPSDLFKVVALPPPVGGALLIGSNELVHVDQAGKTNAVGVNEFSRQVSSFSMTDQSDLALRLEGCIVERLSETNGDLLLVPTTGEIVLVKFRLDGRSVSGISVHPIPPHAGGDIVKSAASSSAFLGDKRVFLGSEDADSILLGWSVPSSGTKKPRPQARHTEEDSGGFSDEDQSEDDVYEDDLYATVPEVVVDGRRPSAESFGSSLYNFREYDRLLNIGPLKDIAFGRSFTSLGGEENAGNDSGLELVASQGWDRSGGLAVMKRGLELQVLNSMRTDLASCVWTASVAHMEEAVSKTTTQAENRECHQYVVVSKATSAEREQSEVFRVEGQELRPFRAPEFNPNEDVTIDIGTLIGKNRVVQILRSEVRSYDGDLGLAQIYPVWDEDTSEERMAISSSLVDPYVAILRDDSTLLLLQADDSGDLDEVELNEQIANSKWTSCCLYFDKTGIFSSISATSDELAQNSMTLFLMTQDCRLFIYRLPDQKLLAIIEGVDCLPPVLSSEPPKRSTTREVLTEIVVADLGDSWSSFPYLIIRSRHDDLAVYRPFISITKSVGEPHADLNFLKETNLVLPRITSGVEDQSSTEEVIKSVPLRIVSNISGFSAIFRPGVSPGFIVRTSTSSPHFLGLKGGYAQSLSKFQTSECGEGFILLDSKVLCFILLCLTYCILSFHTGCHSYYPWTIQQIPIGEQVDHLAYSSSSGMYVIGTSHRTEFKLPEDDELHPEWRNEMTSFFPEVQRSSLKVVSPKTWTVIDSPAEHVMAVKNMSLEISENTHERKDMIVVGTAFARGEDIASRGCVYVFEVIKVVPDPKRPEMDRKLRLVGKEPVKGAVTALSEIGGQGFLIVAQGQKCIVRGLKEDGSLLPVAFMDVQCHVSVVKELKGTGMCIIADAVKGLWFAGYSEEPYKMSLFAKDLDYLEVLAADFLPDGNKLFILVADSDCNLHVLQYDPEDPKSSNGDRLLSRSKFHTGNFISTLTLLPRTSVSSEQMISDVDAMDVDIKIPRHQMLITSQNGSVGLVTCVSEESYRRLSALQSQLTNTIEHPCGLNPRAFRAVESDGTAGRGMLDGKLLFQWLDMSKQRKVEIASRVGANEWEIKADFEAISGEGLGYL</sequence>
<keyword id="KW-0507">mRNA processing</keyword>
<keyword id="KW-0539">Nucleus</keyword>
<keyword id="KW-1185">Reference proteome</keyword>
<keyword id="KW-0694">RNA-binding</keyword>
<name>CFT1_ASPOR</name>
<protein>
    <recommendedName>
        <fullName>Protein cft1</fullName>
    </recommendedName>
    <alternativeName>
        <fullName>Cleavage factor two protein 1</fullName>
    </alternativeName>
</protein>
<dbReference type="EMBL" id="BA000056">
    <property type="protein sequence ID" value="BAE65504.1"/>
    <property type="molecule type" value="Genomic_DNA"/>
</dbReference>
<dbReference type="SMR" id="Q2TZ19"/>
<dbReference type="STRING" id="510516.Q2TZ19"/>
<dbReference type="EnsemblFungi" id="BAE65504">
    <property type="protein sequence ID" value="BAE65504"/>
    <property type="gene ID" value="AO090103000017"/>
</dbReference>
<dbReference type="HOGENOM" id="CLU_002414_2_1_1"/>
<dbReference type="Proteomes" id="UP000006564">
    <property type="component" value="Chromosome 8"/>
</dbReference>
<dbReference type="GO" id="GO:0005634">
    <property type="term" value="C:nucleus"/>
    <property type="evidence" value="ECO:0007669"/>
    <property type="project" value="UniProtKB-SubCell"/>
</dbReference>
<dbReference type="GO" id="GO:0003723">
    <property type="term" value="F:RNA binding"/>
    <property type="evidence" value="ECO:0007669"/>
    <property type="project" value="UniProtKB-KW"/>
</dbReference>
<dbReference type="GO" id="GO:0006397">
    <property type="term" value="P:mRNA processing"/>
    <property type="evidence" value="ECO:0007669"/>
    <property type="project" value="UniProtKB-KW"/>
</dbReference>
<dbReference type="FunFam" id="2.130.10.10:FF:000625">
    <property type="entry name" value="mRNA cleavage and polyadenylation factor subunit"/>
    <property type="match status" value="1"/>
</dbReference>
<dbReference type="FunFam" id="2.130.10.10:FF:000788">
    <property type="entry name" value="mRNA cleavage and polyadenylation factor subunit"/>
    <property type="match status" value="1"/>
</dbReference>
<dbReference type="Gene3D" id="1.10.150.910">
    <property type="match status" value="1"/>
</dbReference>
<dbReference type="Gene3D" id="2.130.10.10">
    <property type="entry name" value="YVTN repeat-like/Quinoprotein amine dehydrogenase"/>
    <property type="match status" value="3"/>
</dbReference>
<dbReference type="InterPro" id="IPR018846">
    <property type="entry name" value="Beta-prop_RSE1/DDB1/CPSF1_1st"/>
</dbReference>
<dbReference type="InterPro" id="IPR004871">
    <property type="entry name" value="Cleavage/polyA-sp_fac_asu_C"/>
</dbReference>
<dbReference type="InterPro" id="IPR050358">
    <property type="entry name" value="RSE1/DDB1/CFT1/CPSF1"/>
</dbReference>
<dbReference type="InterPro" id="IPR015943">
    <property type="entry name" value="WD40/YVTN_repeat-like_dom_sf"/>
</dbReference>
<dbReference type="PANTHER" id="PTHR10644">
    <property type="entry name" value="DNA REPAIR/RNA PROCESSING CPSF FAMILY"/>
    <property type="match status" value="1"/>
</dbReference>
<dbReference type="Pfam" id="PF10433">
    <property type="entry name" value="Beta-prop_RSE1_1st"/>
    <property type="match status" value="1"/>
</dbReference>
<dbReference type="Pfam" id="PF03178">
    <property type="entry name" value="CPSF_A"/>
    <property type="match status" value="1"/>
</dbReference>
<organism>
    <name type="scientific">Aspergillus oryzae (strain ATCC 42149 / RIB 40)</name>
    <name type="common">Yellow koji mold</name>
    <dbReference type="NCBI Taxonomy" id="510516"/>
    <lineage>
        <taxon>Eukaryota</taxon>
        <taxon>Fungi</taxon>
        <taxon>Dikarya</taxon>
        <taxon>Ascomycota</taxon>
        <taxon>Pezizomycotina</taxon>
        <taxon>Eurotiomycetes</taxon>
        <taxon>Eurotiomycetidae</taxon>
        <taxon>Eurotiales</taxon>
        <taxon>Aspergillaceae</taxon>
        <taxon>Aspergillus</taxon>
        <taxon>Aspergillus subgen. Circumdati</taxon>
    </lineage>
</organism>
<proteinExistence type="inferred from homology"/>
<gene>
    <name type="primary">cft1</name>
    <name type="ORF">AO090103000017</name>
</gene>
<evidence type="ECO:0000250" key="1"/>
<evidence type="ECO:0000256" key="2">
    <source>
        <dbReference type="SAM" id="MobiDB-lite"/>
    </source>
</evidence>
<evidence type="ECO:0000305" key="3"/>
<feature type="chain" id="PRO_0000290624" description="Protein cft1">
    <location>
        <begin position="1"/>
        <end position="1393"/>
    </location>
</feature>
<feature type="region of interest" description="Disordered" evidence="2">
    <location>
        <begin position="427"/>
        <end position="458"/>
    </location>
</feature>